<reference evidence="6" key="1">
    <citation type="journal article" date="2006" name="Nature">
        <title>Insights into social insects from the genome of the honeybee Apis mellifera.</title>
        <authorList>
            <consortium name="Honeybee genome sequencing consortium"/>
        </authorList>
    </citation>
    <scope>NUCLEOTIDE SEQUENCE [LARGE SCALE GENOMIC DNA]</scope>
</reference>
<reference evidence="5" key="2">
    <citation type="journal article" date="2007" name="Insect Biochem. Mol. Biol.">
        <title>Novel cuticular proteins revealed by the honey bee genome.</title>
        <authorList>
            <person name="Kucharski R."/>
            <person name="Maleszka J."/>
            <person name="Maleszka R."/>
        </authorList>
    </citation>
    <scope>TISSUE SPECIFICITY</scope>
    <scope>DEVELOPMENTAL STAGE</scope>
</reference>
<reference evidence="5" key="3">
    <citation type="journal article" date="2022" name="Insects">
        <title>Antimicrobial Activity of Apidermin 2 from the Honeybee Apis mellifera.</title>
        <authorList>
            <person name="Kim B.Y."/>
            <person name="Kim Y.H."/>
            <person name="Choi Y.S."/>
            <person name="Lee M.Y."/>
            <person name="Lee K.S."/>
            <person name="Jin B.R."/>
        </authorList>
    </citation>
    <scope>FUNCTION</scope>
    <scope>SUBCELLULAR LOCATION</scope>
    <scope>TISSUE SPECIFICITY</scope>
    <scope>INDUCTION</scope>
</reference>
<evidence type="ECO:0000255" key="1"/>
<evidence type="ECO:0000269" key="2">
    <source>
    </source>
</evidence>
<evidence type="ECO:0000269" key="3">
    <source>
    </source>
</evidence>
<evidence type="ECO:0000303" key="4">
    <source>
    </source>
</evidence>
<evidence type="ECO:0000305" key="5"/>
<evidence type="ECO:0000312" key="6">
    <source>
        <dbReference type="RefSeq" id="NP_001078815.1"/>
    </source>
</evidence>
<sequence length="77" mass="7752">MKSLLILFAIVAVVAAFPELERERRGVIAAPALAAVPLAPTIALAAPKVAPAIALAPAPKLLAAPAVVAAPGPWKAW</sequence>
<organism>
    <name type="scientific">Apis mellifera</name>
    <name type="common">Honeybee</name>
    <dbReference type="NCBI Taxonomy" id="7460"/>
    <lineage>
        <taxon>Eukaryota</taxon>
        <taxon>Metazoa</taxon>
        <taxon>Ecdysozoa</taxon>
        <taxon>Arthropoda</taxon>
        <taxon>Hexapoda</taxon>
        <taxon>Insecta</taxon>
        <taxon>Pterygota</taxon>
        <taxon>Neoptera</taxon>
        <taxon>Endopterygota</taxon>
        <taxon>Hymenoptera</taxon>
        <taxon>Apocrita</taxon>
        <taxon>Aculeata</taxon>
        <taxon>Apoidea</taxon>
        <taxon>Anthophila</taxon>
        <taxon>Apidae</taxon>
        <taxon>Apis</taxon>
    </lineage>
</organism>
<keyword id="KW-0044">Antibiotic</keyword>
<keyword id="KW-0929">Antimicrobial</keyword>
<keyword id="KW-0391">Immunity</keyword>
<keyword id="KW-0399">Innate immunity</keyword>
<keyword id="KW-1185">Reference proteome</keyword>
<keyword id="KW-0964">Secreted</keyword>
<keyword id="KW-0732">Signal</keyword>
<gene>
    <name evidence="4" type="primary">APD2</name>
</gene>
<protein>
    <recommendedName>
        <fullName evidence="4">Apidermin 2</fullName>
    </recommendedName>
    <alternativeName>
        <fullName evidence="4">AmAPD2</fullName>
    </alternativeName>
</protein>
<dbReference type="RefSeq" id="NP_001078815.1">
    <property type="nucleotide sequence ID" value="NM_001085346.1"/>
</dbReference>
<dbReference type="GeneID" id="727161"/>
<dbReference type="KEGG" id="ame:727161"/>
<dbReference type="CTD" id="727161"/>
<dbReference type="InParanoid" id="A0A7M6UUR2"/>
<dbReference type="OMA" id="PWIGSNI"/>
<dbReference type="Proteomes" id="UP000005203">
    <property type="component" value="Linkage group LG4"/>
</dbReference>
<dbReference type="GO" id="GO:0005576">
    <property type="term" value="C:extracellular region"/>
    <property type="evidence" value="ECO:0000314"/>
    <property type="project" value="UniProtKB"/>
</dbReference>
<dbReference type="GO" id="GO:0030246">
    <property type="term" value="F:carbohydrate binding"/>
    <property type="evidence" value="ECO:0000314"/>
    <property type="project" value="UniProtKB"/>
</dbReference>
<dbReference type="GO" id="GO:0140367">
    <property type="term" value="P:antibacterial innate immune response"/>
    <property type="evidence" value="ECO:0000314"/>
    <property type="project" value="UniProtKB"/>
</dbReference>
<dbReference type="GO" id="GO:0061760">
    <property type="term" value="P:antifungal innate immune response"/>
    <property type="evidence" value="ECO:0000314"/>
    <property type="project" value="UniProtKB"/>
</dbReference>
<dbReference type="GO" id="GO:0051873">
    <property type="term" value="P:killing by host of symbiont cells"/>
    <property type="evidence" value="ECO:0000314"/>
    <property type="project" value="UniProtKB"/>
</dbReference>
<name>APID2_APIME</name>
<accession>A0A7M6UUR2</accession>
<accession>A0A8B6WZ66</accession>
<proteinExistence type="evidence at transcript level"/>
<feature type="signal peptide" evidence="1">
    <location>
        <begin position="1"/>
        <end position="16"/>
    </location>
</feature>
<feature type="chain" id="PRO_5035544038" description="Apidermin 2" evidence="1">
    <location>
        <begin position="17"/>
        <end position="77"/>
    </location>
</feature>
<comment type="function">
    <text evidence="3">Antimicrobial peptide that binds cell wall carbohydrates of microbial symbionts and induces structural damage (PubMed:36292906). Binds the cell wall carbohydrates mannan, N-acetyl-D-glucosamine and lipopolysaccharide (PubMed:36292906). Can target fungi, Gram-negative and Gram-positive bacteria (PubMed:36292906).</text>
</comment>
<comment type="subcellular location">
    <subcellularLocation>
        <location evidence="3">Secreted</location>
    </subcellularLocation>
</comment>
<comment type="tissue specificity">
    <text evidence="2 3">Expressed in the epidermis, hypopharyngeal glands, fat body, trachea, esophagus and stomach.</text>
</comment>
<comment type="developmental stage">
    <text evidence="2">Expressed in embryos.</text>
</comment>
<comment type="induction">
    <text evidence="3">Expression is increased following microbial infection by A.apis and P.larvae.</text>
</comment>